<feature type="chain" id="PRO_0000314079" description="B-cell CLL/lymphoma 9-like protein">
    <location>
        <begin position="1"/>
        <end position="1499"/>
    </location>
</feature>
<feature type="region of interest" description="Disordered" evidence="3">
    <location>
        <begin position="1"/>
        <end position="238"/>
    </location>
</feature>
<feature type="region of interest" description="Disordered" evidence="3">
    <location>
        <begin position="271"/>
        <end position="500"/>
    </location>
</feature>
<feature type="region of interest" description="Necessary for interaction with CTNNB1" evidence="1">
    <location>
        <begin position="304"/>
        <end position="533"/>
    </location>
</feature>
<feature type="region of interest" description="Disordered" evidence="3">
    <location>
        <begin position="888"/>
        <end position="1084"/>
    </location>
</feature>
<feature type="region of interest" description="Disordered" evidence="3">
    <location>
        <begin position="1116"/>
        <end position="1201"/>
    </location>
</feature>
<feature type="compositionally biased region" description="Pro residues" evidence="3">
    <location>
        <begin position="20"/>
        <end position="37"/>
    </location>
</feature>
<feature type="compositionally biased region" description="Polar residues" evidence="3">
    <location>
        <begin position="45"/>
        <end position="70"/>
    </location>
</feature>
<feature type="compositionally biased region" description="Polar residues" evidence="3">
    <location>
        <begin position="85"/>
        <end position="96"/>
    </location>
</feature>
<feature type="compositionally biased region" description="Basic and acidic residues" evidence="3">
    <location>
        <begin position="114"/>
        <end position="126"/>
    </location>
</feature>
<feature type="compositionally biased region" description="Basic and acidic residues" evidence="3">
    <location>
        <begin position="134"/>
        <end position="153"/>
    </location>
</feature>
<feature type="compositionally biased region" description="Polar residues" evidence="3">
    <location>
        <begin position="193"/>
        <end position="205"/>
    </location>
</feature>
<feature type="compositionally biased region" description="Gly residues" evidence="3">
    <location>
        <begin position="222"/>
        <end position="232"/>
    </location>
</feature>
<feature type="compositionally biased region" description="Pro residues" evidence="3">
    <location>
        <begin position="281"/>
        <end position="291"/>
    </location>
</feature>
<feature type="compositionally biased region" description="Pro residues" evidence="3">
    <location>
        <begin position="301"/>
        <end position="325"/>
    </location>
</feature>
<feature type="compositionally biased region" description="Low complexity" evidence="3">
    <location>
        <begin position="351"/>
        <end position="363"/>
    </location>
</feature>
<feature type="compositionally biased region" description="Low complexity" evidence="3">
    <location>
        <begin position="370"/>
        <end position="387"/>
    </location>
</feature>
<feature type="compositionally biased region" description="Basic and acidic residues" evidence="3">
    <location>
        <begin position="399"/>
        <end position="421"/>
    </location>
</feature>
<feature type="compositionally biased region" description="Pro residues" evidence="3">
    <location>
        <begin position="445"/>
        <end position="458"/>
    </location>
</feature>
<feature type="compositionally biased region" description="Polar residues" evidence="3">
    <location>
        <begin position="935"/>
        <end position="960"/>
    </location>
</feature>
<feature type="compositionally biased region" description="Polar residues" evidence="3">
    <location>
        <begin position="978"/>
        <end position="996"/>
    </location>
</feature>
<feature type="compositionally biased region" description="Polar residues" evidence="3">
    <location>
        <begin position="1019"/>
        <end position="1041"/>
    </location>
</feature>
<feature type="compositionally biased region" description="Polar residues" evidence="3">
    <location>
        <begin position="1069"/>
        <end position="1084"/>
    </location>
</feature>
<feature type="compositionally biased region" description="Pro residues" evidence="3">
    <location>
        <begin position="1122"/>
        <end position="1132"/>
    </location>
</feature>
<feature type="compositionally biased region" description="Pro residues" evidence="3">
    <location>
        <begin position="1168"/>
        <end position="1179"/>
    </location>
</feature>
<feature type="modified residue" description="Phosphoserine" evidence="19 20 21">
    <location>
        <position position="21"/>
    </location>
</feature>
<feature type="modified residue" description="Phosphoserine" evidence="19 20">
    <location>
        <position position="25"/>
    </location>
</feature>
<feature type="modified residue" description="N6-acetyllysine" evidence="17">
    <location>
        <position position="36"/>
    </location>
</feature>
<feature type="modified residue" description="Phosphoserine" evidence="13 18 19 20">
    <location>
        <position position="88"/>
    </location>
</feature>
<feature type="modified residue" description="N6-acetyllysine" evidence="17">
    <location>
        <position position="108"/>
    </location>
</feature>
<feature type="modified residue" description="N6-acetyllysine" evidence="2">
    <location>
        <position position="110"/>
    </location>
</feature>
<feature type="modified residue" description="Phosphoserine" evidence="19">
    <location>
        <position position="116"/>
    </location>
</feature>
<feature type="modified residue" description="Phosphoserine" evidence="16 19">
    <location>
        <position position="118"/>
    </location>
</feature>
<feature type="modified residue" description="N6-acetyllysine" evidence="17">
    <location>
        <position position="137"/>
    </location>
</feature>
<feature type="modified residue" description="Phosphoserine" evidence="20">
    <location>
        <position position="424"/>
    </location>
</feature>
<feature type="modified residue" description="Phosphothreonine" evidence="20">
    <location>
        <position position="514"/>
    </location>
</feature>
<feature type="modified residue" description="Asymmetric dimethylarginine" evidence="2">
    <location>
        <position position="680"/>
    </location>
</feature>
<feature type="modified residue" description="Phosphoserine" evidence="18 20">
    <location>
        <position position="750"/>
    </location>
</feature>
<feature type="modified residue" description="Phosphoserine" evidence="15 18 20">
    <location>
        <position position="813"/>
    </location>
</feature>
<feature type="modified residue" description="Phosphoserine" evidence="14 20">
    <location>
        <position position="915"/>
    </location>
</feature>
<feature type="modified residue" description="Phosphoserine" evidence="2">
    <location>
        <position position="926"/>
    </location>
</feature>
<feature type="modified residue" description="Phosphoserine" evidence="20">
    <location>
        <position position="938"/>
    </location>
</feature>
<feature type="modified residue" description="Phosphoserine" evidence="2">
    <location>
        <position position="942"/>
    </location>
</feature>
<feature type="modified residue" description="Phosphoserine" evidence="20">
    <location>
        <position position="947"/>
    </location>
</feature>
<feature type="modified residue" description="Phosphoserine" evidence="19">
    <location>
        <position position="975"/>
    </location>
</feature>
<feature type="modified residue" description="Phosphoserine" evidence="2">
    <location>
        <position position="987"/>
    </location>
</feature>
<feature type="modified residue" description="Phosphoserine" evidence="2">
    <location>
        <position position="991"/>
    </location>
</feature>
<feature type="modified residue" description="Phosphoserine" evidence="20">
    <location>
        <position position="997"/>
    </location>
</feature>
<feature type="modified residue" description="Phosphoserine" evidence="16 18 20">
    <location>
        <position position="1004"/>
    </location>
</feature>
<feature type="modified residue" description="Phosphoserine" evidence="16 18">
    <location>
        <position position="1010"/>
    </location>
</feature>
<feature type="modified residue" description="Phosphoserine" evidence="16 20 21">
    <location>
        <position position="1017"/>
    </location>
</feature>
<feature type="cross-link" description="Glycyl lysine isopeptide (Lys-Gly) (interchain with G-Cter in SUMO2)" evidence="22">
    <location>
        <position position="1344"/>
    </location>
</feature>
<feature type="splice variant" id="VSP_030205" description="In isoform 2." evidence="10">
    <location>
        <begin position="9"/>
        <end position="13"/>
    </location>
</feature>
<feature type="splice variant" id="VSP_030206" description="In isoform 4." evidence="11">
    <location>
        <begin position="1238"/>
        <end position="1283"/>
    </location>
</feature>
<feature type="splice variant" id="VSP_030207" description="In isoform 3." evidence="9">
    <original>EKPSSTLQYFPKSENQPPKAQPPNLHLMNLQNMMAEQTPSRPPNLPGQQGVQRGLNMSMCHP</original>
    <variation>WFLRTRPFSFCLYLLRILSLLMWLTPLPPLPAGGWPGGQVPAGAVNRALRFCAGLCVCCISVF</variation>
    <location>
        <begin position="1333"/>
        <end position="1394"/>
    </location>
</feature>
<feature type="splice variant" id="VSP_030208" description="In isoform 3." evidence="9">
    <location>
        <begin position="1395"/>
        <end position="1499"/>
    </location>
</feature>
<feature type="strand" evidence="23">
    <location>
        <begin position="241"/>
        <end position="243"/>
    </location>
</feature>
<feature type="helix" evidence="23">
    <location>
        <begin position="245"/>
        <end position="256"/>
    </location>
</feature>
<feature type="strand" evidence="23">
    <location>
        <begin position="259"/>
        <end position="262"/>
    </location>
</feature>
<feature type="helix" evidence="23">
    <location>
        <begin position="263"/>
        <end position="266"/>
    </location>
</feature>
<dbReference type="EMBL" id="AY296059">
    <property type="protein sequence ID" value="AAQ62697.1"/>
    <property type="molecule type" value="mRNA"/>
</dbReference>
<dbReference type="EMBL" id="AB094091">
    <property type="protein sequence ID" value="BAC76045.1"/>
    <property type="molecule type" value="mRNA"/>
</dbReference>
<dbReference type="EMBL" id="CH471065">
    <property type="protein sequence ID" value="EAW67418.1"/>
    <property type="molecule type" value="Genomic_DNA"/>
</dbReference>
<dbReference type="EMBL" id="BC033257">
    <property type="protein sequence ID" value="AAH33257.1"/>
    <property type="status" value="ALT_INIT"/>
    <property type="molecule type" value="mRNA"/>
</dbReference>
<dbReference type="EMBL" id="AK122650">
    <property type="protein sequence ID" value="BAC85500.1"/>
    <property type="status" value="ALT_INIT"/>
    <property type="molecule type" value="mRNA"/>
</dbReference>
<dbReference type="EMBL" id="AK122882">
    <property type="protein sequence ID" value="BAC85512.1"/>
    <property type="status" value="ALT_INIT"/>
    <property type="molecule type" value="mRNA"/>
</dbReference>
<dbReference type="CCDS" id="CCDS8403.1">
    <molecule id="Q86UU0-1"/>
</dbReference>
<dbReference type="RefSeq" id="NP_001365142.1">
    <molecule id="Q86UU0-1"/>
    <property type="nucleotide sequence ID" value="NM_001378213.1"/>
</dbReference>
<dbReference type="RefSeq" id="NP_872363.1">
    <molecule id="Q86UU0-1"/>
    <property type="nucleotide sequence ID" value="NM_182557.4"/>
</dbReference>
<dbReference type="RefSeq" id="XP_005271568.1">
    <property type="nucleotide sequence ID" value="XM_005271511.2"/>
</dbReference>
<dbReference type="RefSeq" id="XP_006718878.1">
    <molecule id="Q86UU0-1"/>
    <property type="nucleotide sequence ID" value="XM_006718815.4"/>
</dbReference>
<dbReference type="RefSeq" id="XP_054224449.1">
    <molecule id="Q86UU0-1"/>
    <property type="nucleotide sequence ID" value="XM_054368474.1"/>
</dbReference>
<dbReference type="PDB" id="2XB1">
    <property type="method" value="X-ray"/>
    <property type="resolution" value="1.90 A"/>
    <property type="chains" value="A/C=237-271"/>
</dbReference>
<dbReference type="PDB" id="4UP0">
    <property type="method" value="X-ray"/>
    <property type="resolution" value="1.28 A"/>
    <property type="chains" value="A=240-268"/>
</dbReference>
<dbReference type="PDB" id="4UP5">
    <property type="method" value="X-ray"/>
    <property type="resolution" value="1.65 A"/>
    <property type="chains" value="A=240-268"/>
</dbReference>
<dbReference type="PDBsum" id="2XB1"/>
<dbReference type="PDBsum" id="4UP0"/>
<dbReference type="PDBsum" id="4UP5"/>
<dbReference type="SMR" id="Q86UU0"/>
<dbReference type="BioGRID" id="129475">
    <property type="interactions" value="53"/>
</dbReference>
<dbReference type="FunCoup" id="Q86UU0">
    <property type="interactions" value="1737"/>
</dbReference>
<dbReference type="IntAct" id="Q86UU0">
    <property type="interactions" value="20"/>
</dbReference>
<dbReference type="MINT" id="Q86UU0"/>
<dbReference type="STRING" id="9606.ENSP00000335320"/>
<dbReference type="ChEMBL" id="CHEMBL5291978"/>
<dbReference type="GlyCosmos" id="Q86UU0">
    <property type="glycosylation" value="7 sites, 2 glycans"/>
</dbReference>
<dbReference type="GlyGen" id="Q86UU0">
    <property type="glycosylation" value="16 sites, 4 N-linked glycans (1 site), 3 O-linked glycans (11 sites)"/>
</dbReference>
<dbReference type="iPTMnet" id="Q86UU0"/>
<dbReference type="PhosphoSitePlus" id="Q86UU0"/>
<dbReference type="BioMuta" id="BCL9L"/>
<dbReference type="DMDM" id="74750433"/>
<dbReference type="jPOST" id="Q86UU0"/>
<dbReference type="MassIVE" id="Q86UU0"/>
<dbReference type="PaxDb" id="9606-ENSP00000335320"/>
<dbReference type="PeptideAtlas" id="Q86UU0"/>
<dbReference type="ProteomicsDB" id="69890">
    <molecule id="Q86UU0-1"/>
</dbReference>
<dbReference type="ProteomicsDB" id="69891">
    <molecule id="Q86UU0-2"/>
</dbReference>
<dbReference type="ProteomicsDB" id="69892">
    <molecule id="Q86UU0-3"/>
</dbReference>
<dbReference type="ProteomicsDB" id="69893">
    <molecule id="Q86UU0-4"/>
</dbReference>
<dbReference type="Pumba" id="Q86UU0"/>
<dbReference type="Antibodypedia" id="32548">
    <property type="antibodies" value="137 antibodies from 26 providers"/>
</dbReference>
<dbReference type="DNASU" id="283149"/>
<dbReference type="Ensembl" id="ENST00000334801.7">
    <molecule id="Q86UU0-1"/>
    <property type="protein sequence ID" value="ENSP00000335320.3"/>
    <property type="gene ID" value="ENSG00000186174.13"/>
</dbReference>
<dbReference type="Ensembl" id="ENST00000683865.1">
    <molecule id="Q86UU0-1"/>
    <property type="protein sequence ID" value="ENSP00000507778.1"/>
    <property type="gene ID" value="ENSG00000186174.13"/>
</dbReference>
<dbReference type="GeneID" id="283149"/>
<dbReference type="KEGG" id="hsa:283149"/>
<dbReference type="MANE-Select" id="ENST00000683865.1">
    <property type="protein sequence ID" value="ENSP00000507778.1"/>
    <property type="RefSeq nucleotide sequence ID" value="NM_001378213.1"/>
    <property type="RefSeq protein sequence ID" value="NP_001365142.1"/>
</dbReference>
<dbReference type="UCSC" id="uc001pug.5">
    <molecule id="Q86UU0-1"/>
    <property type="organism name" value="human"/>
</dbReference>
<dbReference type="AGR" id="HGNC:23688"/>
<dbReference type="CTD" id="283149"/>
<dbReference type="DisGeNET" id="283149"/>
<dbReference type="GeneCards" id="BCL9L"/>
<dbReference type="HGNC" id="HGNC:23688">
    <property type="gene designation" value="BCL9L"/>
</dbReference>
<dbReference type="HPA" id="ENSG00000186174">
    <property type="expression patterns" value="Low tissue specificity"/>
</dbReference>
<dbReference type="MalaCards" id="BCL9L"/>
<dbReference type="MIM" id="609004">
    <property type="type" value="gene"/>
</dbReference>
<dbReference type="neXtProt" id="NX_Q86UU0"/>
<dbReference type="OpenTargets" id="ENSG00000186174"/>
<dbReference type="PharmGKB" id="PA134974002"/>
<dbReference type="VEuPathDB" id="HostDB:ENSG00000186174"/>
<dbReference type="eggNOG" id="ENOG502QR2B">
    <property type="taxonomic scope" value="Eukaryota"/>
</dbReference>
<dbReference type="GeneTree" id="ENSGT00730000110915"/>
<dbReference type="HOGENOM" id="CLU_004973_0_0_1"/>
<dbReference type="InParanoid" id="Q86UU0"/>
<dbReference type="OMA" id="NMMAEQP"/>
<dbReference type="OrthoDB" id="7668649at2759"/>
<dbReference type="PAN-GO" id="Q86UU0">
    <property type="GO annotations" value="5 GO annotations based on evolutionary models"/>
</dbReference>
<dbReference type="PhylomeDB" id="Q86UU0"/>
<dbReference type="TreeFam" id="TF331144"/>
<dbReference type="PathwayCommons" id="Q86UU0"/>
<dbReference type="Reactome" id="R-HSA-201722">
    <property type="pathway name" value="Formation of the beta-catenin:TCF transactivating complex"/>
</dbReference>
<dbReference type="Reactome" id="R-HSA-3769402">
    <property type="pathway name" value="Deactivation of the beta-catenin transactivating complex"/>
</dbReference>
<dbReference type="SignaLink" id="Q86UU0"/>
<dbReference type="BioGRID-ORCS" id="283149">
    <property type="hits" value="41 hits in 1167 CRISPR screens"/>
</dbReference>
<dbReference type="ChiTaRS" id="BCL9L">
    <property type="organism name" value="human"/>
</dbReference>
<dbReference type="EvolutionaryTrace" id="Q86UU0"/>
<dbReference type="GenomeRNAi" id="283149"/>
<dbReference type="Pharos" id="Q86UU0">
    <property type="development level" value="Tbio"/>
</dbReference>
<dbReference type="PRO" id="PR:Q86UU0"/>
<dbReference type="Proteomes" id="UP000005640">
    <property type="component" value="Chromosome 11"/>
</dbReference>
<dbReference type="RNAct" id="Q86UU0">
    <property type="molecule type" value="protein"/>
</dbReference>
<dbReference type="Bgee" id="ENSG00000186174">
    <property type="expression patterns" value="Expressed in granulocyte and 170 other cell types or tissues"/>
</dbReference>
<dbReference type="ExpressionAtlas" id="Q86UU0">
    <property type="expression patterns" value="baseline and differential"/>
</dbReference>
<dbReference type="GO" id="GO:1990907">
    <property type="term" value="C:beta-catenin-TCF complex"/>
    <property type="evidence" value="ECO:0000314"/>
    <property type="project" value="FlyBase"/>
</dbReference>
<dbReference type="GO" id="GO:0001650">
    <property type="term" value="C:fibrillar center"/>
    <property type="evidence" value="ECO:0000314"/>
    <property type="project" value="HPA"/>
</dbReference>
<dbReference type="GO" id="GO:0005654">
    <property type="term" value="C:nucleoplasm"/>
    <property type="evidence" value="ECO:0000314"/>
    <property type="project" value="HPA"/>
</dbReference>
<dbReference type="GO" id="GO:0005634">
    <property type="term" value="C:nucleus"/>
    <property type="evidence" value="ECO:0000314"/>
    <property type="project" value="UniProtKB"/>
</dbReference>
<dbReference type="GO" id="GO:0008013">
    <property type="term" value="F:beta-catenin binding"/>
    <property type="evidence" value="ECO:0000314"/>
    <property type="project" value="MGI"/>
</dbReference>
<dbReference type="GO" id="GO:0003713">
    <property type="term" value="F:transcription coactivator activity"/>
    <property type="evidence" value="ECO:0000303"/>
    <property type="project" value="BHF-UCL"/>
</dbReference>
<dbReference type="GO" id="GO:0060070">
    <property type="term" value="P:canonical Wnt signaling pathway"/>
    <property type="evidence" value="ECO:0000318"/>
    <property type="project" value="GO_Central"/>
</dbReference>
<dbReference type="GO" id="GO:0045445">
    <property type="term" value="P:myoblast differentiation"/>
    <property type="evidence" value="ECO:0007669"/>
    <property type="project" value="Ensembl"/>
</dbReference>
<dbReference type="GO" id="GO:0030512">
    <property type="term" value="P:negative regulation of transforming growth factor beta receptor signaling pathway"/>
    <property type="evidence" value="ECO:0000315"/>
    <property type="project" value="BHF-UCL"/>
</dbReference>
<dbReference type="GO" id="GO:0010718">
    <property type="term" value="P:positive regulation of epithelial to mesenchymal transition"/>
    <property type="evidence" value="ECO:0000315"/>
    <property type="project" value="BHF-UCL"/>
</dbReference>
<dbReference type="GO" id="GO:0045944">
    <property type="term" value="P:positive regulation of transcription by RNA polymerase II"/>
    <property type="evidence" value="ECO:0000315"/>
    <property type="project" value="BHF-UCL"/>
</dbReference>
<dbReference type="GO" id="GO:0022604">
    <property type="term" value="P:regulation of cell morphogenesis"/>
    <property type="evidence" value="ECO:0000315"/>
    <property type="project" value="BHF-UCL"/>
</dbReference>
<dbReference type="GO" id="GO:0035914">
    <property type="term" value="P:skeletal muscle cell differentiation"/>
    <property type="evidence" value="ECO:0007669"/>
    <property type="project" value="Ensembl"/>
</dbReference>
<dbReference type="GO" id="GO:0035019">
    <property type="term" value="P:somatic stem cell population maintenance"/>
    <property type="evidence" value="ECO:0007669"/>
    <property type="project" value="Ensembl"/>
</dbReference>
<dbReference type="GO" id="GO:0006366">
    <property type="term" value="P:transcription by RNA polymerase II"/>
    <property type="evidence" value="ECO:0007669"/>
    <property type="project" value="Ensembl"/>
</dbReference>
<dbReference type="Gene3D" id="3.30.40.10">
    <property type="entry name" value="Zinc/RING finger domain, C3HC4 (zinc finger)"/>
    <property type="match status" value="1"/>
</dbReference>
<dbReference type="InterPro" id="IPR015668">
    <property type="entry name" value="Bcl-9/Bcl-9l"/>
</dbReference>
<dbReference type="InterPro" id="IPR024670">
    <property type="entry name" value="BCL9_beta-catenin-bd_dom"/>
</dbReference>
<dbReference type="InterPro" id="IPR013083">
    <property type="entry name" value="Znf_RING/FYVE/PHD"/>
</dbReference>
<dbReference type="PANTHER" id="PTHR15185:SF3">
    <property type="entry name" value="B-CELL CLL_LYMPHOMA 9-LIKE PROTEIN"/>
    <property type="match status" value="1"/>
</dbReference>
<dbReference type="PANTHER" id="PTHR15185">
    <property type="entry name" value="BCL9"/>
    <property type="match status" value="1"/>
</dbReference>
<dbReference type="Pfam" id="PF11502">
    <property type="entry name" value="BCL9"/>
    <property type="match status" value="1"/>
</dbReference>
<sequence length="1499" mass="157129">MRILANKTRLPHPRRREAPGSPPLSPRGHCPPAPAKPMHPENKLTNHGKTGNGGAQSQHQNVNQGPTCNVGSKGVGAGNHGAKANQISPSNSSLKNPQAGVPPFSSLKGKVKRDRSVSVDSGEQREAGTPSLDSEAKEVAPRSKRRCVLERKQPYSGDEWCSGPDSEEDDKPIGATHNCNVADPAMAAPQLGPGQTTQLPLSESSVPGAPHGPPPGLRPDAPGGGGGGGGVPGKPPSQFVYVFTTHLANTAAEAVLQGRADSILAYHQQNVPRAKLDQAPKVPPTPEPLPLSTPSAGTPQSQPPPLPPPPPPAPGSAPPALPPEGPPEDSSQDLAPNSVGAASTGGGTGGTHPNTPTATTANNPLPPGGDPSSAPGPALLGEAAAPGNGQRSLVGSEGLSKEQLEHRERSLQTLRDIERLLLRSGETEPFLKGPPGGAGEGGPPAQAPPPPQQPPTAPPSGLKKYEEPLQSMISQTQSLGGPPLEHEVPGHPPGGDMGQQMNMMIQRLGQDSLTPEQVAWRKLQEEYYEEKRRKEEQIGLHGSRPLQDMMGMGGMMVRGPPPPYHSKPGDQWPPGMGAQLRGPMDVQDPMQLRGGPPFPGPRFPGNQIQRVPGFGGMQSMPMEVPMNAMQRPVRPGMGWTEDLPPMGGPSNFAQNTMPYPGGQGEAERFMTPRVREELLRHQLLEKRSMGMQRPLGMAGSGMGQSMEMERMMQAHRQMDPAMFPGQMAGGEGLAGTPMGMEFGGGRGLLSPPMGQSGLREVDPPMGPGNLNMNMNVNMNMNMNLNVQMTPQQQMLMSQKMRGPGDLMGPQGLSPEEMARVRAQNSSGVMGGPQKMLMPSQFPNQGQQGFSGGQGPYQAMSQDMGNTQDMFSPDQSSMPMSNVGTTRLSHMPLPPASNPPGTVHSAPNRGLGRRPSDLTISINQMGSPGMGHLKSPTLSQVHSPLVTSPSANLKSPQTPSQMVPLPSANPPGPLKSPQVLGSSLSVRSPTGSPSRLKSPSMAVPSPGWVASPKTAMPSPGVSQNKQPPLNMNSSTTLSNMEQGTLPPSGPRSSSSAPPANPPSGLMNPSLPFTSSPDPTPSQNPLSLMMTQMSKYAMPSSTPLYHNAIKTIATSDDELLPDRPLLPPPPPPQGSGPGISNSQPSQMHLNSAAAQSPMGMNLPGQQPLSHEPPPAMLPSPTPLGSNIPLHPNAQGTGGPPQNSMMMAPGGPDSLNAPCGPVPSSSQMMPFPPRLQQPHGAMAPTGGGGGGPGLQQHYPSGMALPPEDLPNQPPGPMPPQQHLMGKAMAGRMGDAYPPGVLPGVASVLNDPELSEVIRPTPTGIPEFDLSRIIPSEKPSSTLQYFPKSENQPPKAQPPNLHLMNLQNMMAEQTPSRPPNLPGQQGVQRGLNMSMCHPGQMSLLGRTGVPPQQGMVPHGLHQGVMSPPQGLMTQQNFMLMKQRGVGGEVYSQPPHMLSPQGSLMGPPPQQNLMVSHPLRQRSVSLDSQMGYLPAPGGMANLPF</sequence>
<proteinExistence type="evidence at protein level"/>
<organism>
    <name type="scientific">Homo sapiens</name>
    <name type="common">Human</name>
    <dbReference type="NCBI Taxonomy" id="9606"/>
    <lineage>
        <taxon>Eukaryota</taxon>
        <taxon>Metazoa</taxon>
        <taxon>Chordata</taxon>
        <taxon>Craniata</taxon>
        <taxon>Vertebrata</taxon>
        <taxon>Euteleostomi</taxon>
        <taxon>Mammalia</taxon>
        <taxon>Eutheria</taxon>
        <taxon>Euarchontoglires</taxon>
        <taxon>Primates</taxon>
        <taxon>Haplorrhini</taxon>
        <taxon>Catarrhini</taxon>
        <taxon>Hominidae</taxon>
        <taxon>Homo</taxon>
    </lineage>
</organism>
<name>BCL9L_HUMAN</name>
<keyword id="KW-0002">3D-structure</keyword>
<keyword id="KW-0007">Acetylation</keyword>
<keyword id="KW-0010">Activator</keyword>
<keyword id="KW-0025">Alternative splicing</keyword>
<keyword id="KW-1017">Isopeptide bond</keyword>
<keyword id="KW-0488">Methylation</keyword>
<keyword id="KW-0539">Nucleus</keyword>
<keyword id="KW-0597">Phosphoprotein</keyword>
<keyword id="KW-1267">Proteomics identification</keyword>
<keyword id="KW-1185">Reference proteome</keyword>
<keyword id="KW-0804">Transcription</keyword>
<keyword id="KW-0805">Transcription regulation</keyword>
<keyword id="KW-0832">Ubl conjugation</keyword>
<gene>
    <name type="primary">BCL9L</name>
    <name type="synonym">DLNB11</name>
</gene>
<reference key="1">
    <citation type="journal article" date="2004" name="Genes Dev.">
        <title>Essential role of BCL9-2 in the switch between beta-catenin's adhesive and transcriptional functions.</title>
        <authorList>
            <person name="Brembeck F.H."/>
            <person name="Schwarz-Romond T."/>
            <person name="Bakkers J."/>
            <person name="Wilhelm S."/>
            <person name="Hammerschmidt M."/>
            <person name="Birchmeier W."/>
        </authorList>
    </citation>
    <scope>NUCLEOTIDE SEQUENCE [MRNA] (ISOFORM 2)</scope>
</reference>
<reference key="2">
    <citation type="submission" date="2002-10" db="EMBL/GenBank/DDBJ databases">
        <title>Identification of a 500-kb region of common allelic loss in chromosome 11q23 in non-MYCN amplified type of neuroblastoma.</title>
        <authorList>
            <person name="Kubo T."/>
            <person name="Arai Y."/>
            <person name="Ohira M."/>
            <person name="Gamou T."/>
            <person name="Maeno G."/>
            <person name="Sakiyama T."/>
            <person name="Toyoda A."/>
            <person name="Hattori M."/>
            <person name="Sakaki Y."/>
            <person name="Nakagawara A."/>
            <person name="Ohki M."/>
        </authorList>
    </citation>
    <scope>NUCLEOTIDE SEQUENCE [MRNA] (ISOFORM 1)</scope>
</reference>
<reference key="3">
    <citation type="submission" date="2005-07" db="EMBL/GenBank/DDBJ databases">
        <authorList>
            <person name="Mural R.J."/>
            <person name="Istrail S."/>
            <person name="Sutton G.G."/>
            <person name="Florea L."/>
            <person name="Halpern A.L."/>
            <person name="Mobarry C.M."/>
            <person name="Lippert R."/>
            <person name="Walenz B."/>
            <person name="Shatkay H."/>
            <person name="Dew I."/>
            <person name="Miller J.R."/>
            <person name="Flanigan M.J."/>
            <person name="Edwards N.J."/>
            <person name="Bolanos R."/>
            <person name="Fasulo D."/>
            <person name="Halldorsson B.V."/>
            <person name="Hannenhalli S."/>
            <person name="Turner R."/>
            <person name="Yooseph S."/>
            <person name="Lu F."/>
            <person name="Nusskern D.R."/>
            <person name="Shue B.C."/>
            <person name="Zheng X.H."/>
            <person name="Zhong F."/>
            <person name="Delcher A.L."/>
            <person name="Huson D.H."/>
            <person name="Kravitz S.A."/>
            <person name="Mouchard L."/>
            <person name="Reinert K."/>
            <person name="Remington K.A."/>
            <person name="Clark A.G."/>
            <person name="Waterman M.S."/>
            <person name="Eichler E.E."/>
            <person name="Adams M.D."/>
            <person name="Hunkapiller M.W."/>
            <person name="Myers E.W."/>
            <person name="Venter J.C."/>
        </authorList>
    </citation>
    <scope>NUCLEOTIDE SEQUENCE [LARGE SCALE GENOMIC DNA]</scope>
</reference>
<reference key="4">
    <citation type="journal article" date="2004" name="Genome Res.">
        <title>The status, quality, and expansion of the NIH full-length cDNA project: the Mammalian Gene Collection (MGC).</title>
        <authorList>
            <consortium name="The MGC Project Team"/>
        </authorList>
    </citation>
    <scope>NUCLEOTIDE SEQUENCE [LARGE SCALE MRNA] OF 707-1499 (ISOFORM 4)</scope>
    <source>
        <tissue>Prostate</tissue>
    </source>
</reference>
<reference key="5">
    <citation type="journal article" date="2004" name="Nat. Genet.">
        <title>Complete sequencing and characterization of 21,243 full-length human cDNAs.</title>
        <authorList>
            <person name="Ota T."/>
            <person name="Suzuki Y."/>
            <person name="Nishikawa T."/>
            <person name="Otsuki T."/>
            <person name="Sugiyama T."/>
            <person name="Irie R."/>
            <person name="Wakamatsu A."/>
            <person name="Hayashi K."/>
            <person name="Sato H."/>
            <person name="Nagai K."/>
            <person name="Kimura K."/>
            <person name="Makita H."/>
            <person name="Sekine M."/>
            <person name="Obayashi M."/>
            <person name="Nishi T."/>
            <person name="Shibahara T."/>
            <person name="Tanaka T."/>
            <person name="Ishii S."/>
            <person name="Yamamoto J."/>
            <person name="Saito K."/>
            <person name="Kawai Y."/>
            <person name="Isono Y."/>
            <person name="Nakamura Y."/>
            <person name="Nagahari K."/>
            <person name="Murakami K."/>
            <person name="Yasuda T."/>
            <person name="Iwayanagi T."/>
            <person name="Wagatsuma M."/>
            <person name="Shiratori A."/>
            <person name="Sudo H."/>
            <person name="Hosoiri T."/>
            <person name="Kaku Y."/>
            <person name="Kodaira H."/>
            <person name="Kondo H."/>
            <person name="Sugawara M."/>
            <person name="Takahashi M."/>
            <person name="Kanda K."/>
            <person name="Yokoi T."/>
            <person name="Furuya T."/>
            <person name="Kikkawa E."/>
            <person name="Omura Y."/>
            <person name="Abe K."/>
            <person name="Kamihara K."/>
            <person name="Katsuta N."/>
            <person name="Sato K."/>
            <person name="Tanikawa M."/>
            <person name="Yamazaki M."/>
            <person name="Ninomiya K."/>
            <person name="Ishibashi T."/>
            <person name="Yamashita H."/>
            <person name="Murakawa K."/>
            <person name="Fujimori K."/>
            <person name="Tanai H."/>
            <person name="Kimata M."/>
            <person name="Watanabe M."/>
            <person name="Hiraoka S."/>
            <person name="Chiba Y."/>
            <person name="Ishida S."/>
            <person name="Ono Y."/>
            <person name="Takiguchi S."/>
            <person name="Watanabe S."/>
            <person name="Yosida M."/>
            <person name="Hotuta T."/>
            <person name="Kusano J."/>
            <person name="Kanehori K."/>
            <person name="Takahashi-Fujii A."/>
            <person name="Hara H."/>
            <person name="Tanase T.-O."/>
            <person name="Nomura Y."/>
            <person name="Togiya S."/>
            <person name="Komai F."/>
            <person name="Hara R."/>
            <person name="Takeuchi K."/>
            <person name="Arita M."/>
            <person name="Imose N."/>
            <person name="Musashino K."/>
            <person name="Yuuki H."/>
            <person name="Oshima A."/>
            <person name="Sasaki N."/>
            <person name="Aotsuka S."/>
            <person name="Yoshikawa Y."/>
            <person name="Matsunawa H."/>
            <person name="Ichihara T."/>
            <person name="Shiohata N."/>
            <person name="Sano S."/>
            <person name="Moriya S."/>
            <person name="Momiyama H."/>
            <person name="Satoh N."/>
            <person name="Takami S."/>
            <person name="Terashima Y."/>
            <person name="Suzuki O."/>
            <person name="Nakagawa S."/>
            <person name="Senoh A."/>
            <person name="Mizoguchi H."/>
            <person name="Goto Y."/>
            <person name="Shimizu F."/>
            <person name="Wakebe H."/>
            <person name="Hishigaki H."/>
            <person name="Watanabe T."/>
            <person name="Sugiyama A."/>
            <person name="Takemoto M."/>
            <person name="Kawakami B."/>
            <person name="Yamazaki M."/>
            <person name="Watanabe K."/>
            <person name="Kumagai A."/>
            <person name="Itakura S."/>
            <person name="Fukuzumi Y."/>
            <person name="Fujimori Y."/>
            <person name="Komiyama M."/>
            <person name="Tashiro H."/>
            <person name="Tanigami A."/>
            <person name="Fujiwara T."/>
            <person name="Ono T."/>
            <person name="Yamada K."/>
            <person name="Fujii Y."/>
            <person name="Ozaki K."/>
            <person name="Hirao M."/>
            <person name="Ohmori Y."/>
            <person name="Kawabata A."/>
            <person name="Hikiji T."/>
            <person name="Kobatake N."/>
            <person name="Inagaki H."/>
            <person name="Ikema Y."/>
            <person name="Okamoto S."/>
            <person name="Okitani R."/>
            <person name="Kawakami T."/>
            <person name="Noguchi S."/>
            <person name="Itoh T."/>
            <person name="Shigeta K."/>
            <person name="Senba T."/>
            <person name="Matsumura K."/>
            <person name="Nakajima Y."/>
            <person name="Mizuno T."/>
            <person name="Morinaga M."/>
            <person name="Sasaki M."/>
            <person name="Togashi T."/>
            <person name="Oyama M."/>
            <person name="Hata H."/>
            <person name="Watanabe M."/>
            <person name="Komatsu T."/>
            <person name="Mizushima-Sugano J."/>
            <person name="Satoh T."/>
            <person name="Shirai Y."/>
            <person name="Takahashi Y."/>
            <person name="Nakagawa K."/>
            <person name="Okumura K."/>
            <person name="Nagase T."/>
            <person name="Nomura N."/>
            <person name="Kikuchi H."/>
            <person name="Masuho Y."/>
            <person name="Yamashita R."/>
            <person name="Nakai K."/>
            <person name="Yada T."/>
            <person name="Nakamura Y."/>
            <person name="Ohara O."/>
            <person name="Isogai T."/>
            <person name="Sugano S."/>
        </authorList>
    </citation>
    <scope>NUCLEOTIDE SEQUENCE [LARGE SCALE MRNA] OF 865-1499 (ISOFORMS 1/2)</scope>
    <scope>NUCLEOTIDE SEQUENCE [LARGE SCALE MRNA] OF 466-1499 (ISOFORM 3)</scope>
    <source>
        <tissue>Brain</tissue>
    </source>
</reference>
<reference key="6">
    <citation type="journal article" date="2003" name="Int. J. Mol. Med.">
        <title>Identification and characterization of human BCL9L gene and mouse Bcl9l gene in silico.</title>
        <authorList>
            <person name="Katoh M."/>
            <person name="Katoh M."/>
        </authorList>
    </citation>
    <scope>TISSUE SPECIFICITY</scope>
</reference>
<reference key="7">
    <citation type="journal article" date="2006" name="Cell">
        <title>Global, in vivo, and site-specific phosphorylation dynamics in signaling networks.</title>
        <authorList>
            <person name="Olsen J.V."/>
            <person name="Blagoev B."/>
            <person name="Gnad F."/>
            <person name="Macek B."/>
            <person name="Kumar C."/>
            <person name="Mortensen P."/>
            <person name="Mann M."/>
        </authorList>
    </citation>
    <scope>PHOSPHORYLATION [LARGE SCALE ANALYSIS] AT SER-915</scope>
    <scope>IDENTIFICATION BY MASS SPECTROMETRY [LARGE SCALE ANALYSIS]</scope>
    <source>
        <tissue>Cervix carcinoma</tissue>
    </source>
</reference>
<reference key="8">
    <citation type="journal article" date="2006" name="Mol. Cell">
        <title>Crystal structure of a beta-catenin/BCL9/Tcf4 complex.</title>
        <authorList>
            <person name="Sampietro J."/>
            <person name="Dahlberg C.L."/>
            <person name="Cho U.S."/>
            <person name="Hinds T.R."/>
            <person name="Kimelman D."/>
            <person name="Xu W."/>
        </authorList>
    </citation>
    <scope>INTERACTION WITH CTNNB1</scope>
</reference>
<reference key="9">
    <citation type="journal article" date="2006" name="Nat. Biotechnol.">
        <title>A probability-based approach for high-throughput protein phosphorylation analysis and site localization.</title>
        <authorList>
            <person name="Beausoleil S.A."/>
            <person name="Villen J."/>
            <person name="Gerber S.A."/>
            <person name="Rush J."/>
            <person name="Gygi S.P."/>
        </authorList>
    </citation>
    <scope>PHOSPHORYLATION [LARGE SCALE ANALYSIS] AT SER-88</scope>
    <scope>IDENTIFICATION BY MASS SPECTROMETRY [LARGE SCALE ANALYSIS]</scope>
    <source>
        <tissue>Cervix carcinoma</tissue>
    </source>
</reference>
<reference key="10">
    <citation type="journal article" date="2007" name="Cancer Sci.">
        <title>Up-regulation of a BCL9-related beta-catenin-binding protein, B9L, in different stages of sporadic colorectal adenoma.</title>
        <authorList>
            <person name="Sakamoto I."/>
            <person name="Ohwada S."/>
            <person name="Toya H."/>
            <person name="Togo N."/>
            <person name="Kashiwabara K."/>
            <person name="Oyama T."/>
            <person name="Nakajima T."/>
            <person name="Ito H."/>
            <person name="Adachi S."/>
            <person name="Jigami T."/>
            <person name="Akiyama T."/>
        </authorList>
    </citation>
    <scope>SUBCELLULAR LOCATION</scope>
    <scope>TISSUE SPECIFICITY</scope>
</reference>
<reference key="11">
    <citation type="journal article" date="2007" name="Cancer Sci.">
        <title>Immunohistochemical expression of the beta-catenin-interacting protein B9L is associated with histological high nuclear grade and immunohistochemical ErbB2/HER-2 expression in breast cancers.</title>
        <authorList>
            <person name="Toya H."/>
            <person name="Oyama T."/>
            <person name="Ohwada S."/>
            <person name="Togo N."/>
            <person name="Sakamoto I."/>
            <person name="Horiguchi J."/>
            <person name="Koibuchi Y."/>
            <person name="Adachi S."/>
            <person name="Jigami T."/>
            <person name="Nakajima T."/>
            <person name="Akiyama T."/>
        </authorList>
    </citation>
    <scope>SUBCELLULAR LOCATION</scope>
    <scope>TISSUE SPECIFICITY</scope>
</reference>
<reference key="12">
    <citation type="journal article" date="2007" name="Mech. Dev.">
        <title>BCL9-2 binds Arm/beta-catenin in a Tyr142-independent manner and requires Pygopus for its function in Wg/Wnt signaling.</title>
        <authorList>
            <person name="Hoffmans R."/>
            <person name="Basler K."/>
        </authorList>
    </citation>
    <scope>IDENTIFICATION IN A COMPLEX WITH CDC73; CTNNB1 AND PYGO1</scope>
    <scope>INTERACTION WITH CTNNB1</scope>
</reference>
<reference key="13">
    <citation type="journal article" date="2008" name="J. Proteome Res.">
        <title>Combining protein-based IMAC, peptide-based IMAC, and MudPIT for efficient phosphoproteomic analysis.</title>
        <authorList>
            <person name="Cantin G.T."/>
            <person name="Yi W."/>
            <person name="Lu B."/>
            <person name="Park S.K."/>
            <person name="Xu T."/>
            <person name="Lee J.-D."/>
            <person name="Yates J.R. III"/>
        </authorList>
    </citation>
    <scope>PHOSPHORYLATION [LARGE SCALE ANALYSIS] AT SER-813</scope>
    <scope>IDENTIFICATION BY MASS SPECTROMETRY [LARGE SCALE ANALYSIS]</scope>
    <source>
        <tissue>Cervix carcinoma</tissue>
    </source>
</reference>
<reference key="14">
    <citation type="journal article" date="2008" name="Proc. Natl. Acad. Sci. U.S.A.">
        <title>A quantitative atlas of mitotic phosphorylation.</title>
        <authorList>
            <person name="Dephoure N."/>
            <person name="Zhou C."/>
            <person name="Villen J."/>
            <person name="Beausoleil S.A."/>
            <person name="Bakalarski C.E."/>
            <person name="Elledge S.J."/>
            <person name="Gygi S.P."/>
        </authorList>
    </citation>
    <scope>PHOSPHORYLATION [LARGE SCALE ANALYSIS] AT SER-118; SER-1004; SER-1010 AND SER-1017</scope>
    <scope>IDENTIFICATION BY MASS SPECTROMETRY [LARGE SCALE ANALYSIS]</scope>
    <source>
        <tissue>Cervix carcinoma</tissue>
    </source>
</reference>
<reference key="15">
    <citation type="journal article" date="2009" name="Anal. Chem.">
        <title>Lys-N and trypsin cover complementary parts of the phosphoproteome in a refined SCX-based approach.</title>
        <authorList>
            <person name="Gauci S."/>
            <person name="Helbig A.O."/>
            <person name="Slijper M."/>
            <person name="Krijgsveld J."/>
            <person name="Heck A.J."/>
            <person name="Mohammed S."/>
        </authorList>
    </citation>
    <scope>IDENTIFICATION BY MASS SPECTROMETRY [LARGE SCALE ANALYSIS]</scope>
</reference>
<reference key="16">
    <citation type="journal article" date="2009" name="Science">
        <title>Lysine acetylation targets protein complexes and co-regulates major cellular functions.</title>
        <authorList>
            <person name="Choudhary C."/>
            <person name="Kumar C."/>
            <person name="Gnad F."/>
            <person name="Nielsen M.L."/>
            <person name="Rehman M."/>
            <person name="Walther T.C."/>
            <person name="Olsen J.V."/>
            <person name="Mann M."/>
        </authorList>
    </citation>
    <scope>ACETYLATION [LARGE SCALE ANALYSIS] AT LYS-36; LYS-108 AND LYS-137</scope>
    <scope>IDENTIFICATION BY MASS SPECTROMETRY [LARGE SCALE ANALYSIS]</scope>
</reference>
<reference key="17">
    <citation type="journal article" date="2010" name="Sci. Signal.">
        <title>Quantitative phosphoproteomics reveals widespread full phosphorylation site occupancy during mitosis.</title>
        <authorList>
            <person name="Olsen J.V."/>
            <person name="Vermeulen M."/>
            <person name="Santamaria A."/>
            <person name="Kumar C."/>
            <person name="Miller M.L."/>
            <person name="Jensen L.J."/>
            <person name="Gnad F."/>
            <person name="Cox J."/>
            <person name="Jensen T.S."/>
            <person name="Nigg E.A."/>
            <person name="Brunak S."/>
            <person name="Mann M."/>
        </authorList>
    </citation>
    <scope>PHOSPHORYLATION [LARGE SCALE ANALYSIS] AT SER-88; SER-750; SER-813; SER-1004 AND SER-1010</scope>
    <scope>IDENTIFICATION BY MASS SPECTROMETRY [LARGE SCALE ANALYSIS]</scope>
    <source>
        <tissue>Cervix carcinoma</tissue>
    </source>
</reference>
<reference key="18">
    <citation type="journal article" date="2011" name="BMC Syst. Biol.">
        <title>Initial characterization of the human central proteome.</title>
        <authorList>
            <person name="Burkard T.R."/>
            <person name="Planyavsky M."/>
            <person name="Kaupe I."/>
            <person name="Breitwieser F.P."/>
            <person name="Buerckstuemmer T."/>
            <person name="Bennett K.L."/>
            <person name="Superti-Furga G."/>
            <person name="Colinge J."/>
        </authorList>
    </citation>
    <scope>IDENTIFICATION BY MASS SPECTROMETRY [LARGE SCALE ANALYSIS]</scope>
</reference>
<reference key="19">
    <citation type="journal article" date="2011" name="Sci. Signal.">
        <title>System-wide temporal characterization of the proteome and phosphoproteome of human embryonic stem cell differentiation.</title>
        <authorList>
            <person name="Rigbolt K.T."/>
            <person name="Prokhorova T.A."/>
            <person name="Akimov V."/>
            <person name="Henningsen J."/>
            <person name="Johansen P.T."/>
            <person name="Kratchmarova I."/>
            <person name="Kassem M."/>
            <person name="Mann M."/>
            <person name="Olsen J.V."/>
            <person name="Blagoev B."/>
        </authorList>
    </citation>
    <scope>PHOSPHORYLATION [LARGE SCALE ANALYSIS] AT SER-21; SER-25; SER-88; SER-116; SER-118 AND SER-975</scope>
    <scope>IDENTIFICATION BY MASS SPECTROMETRY [LARGE SCALE ANALYSIS]</scope>
</reference>
<reference key="20">
    <citation type="journal article" date="2013" name="J. Proteome Res.">
        <title>Toward a comprehensive characterization of a human cancer cell phosphoproteome.</title>
        <authorList>
            <person name="Zhou H."/>
            <person name="Di Palma S."/>
            <person name="Preisinger C."/>
            <person name="Peng M."/>
            <person name="Polat A.N."/>
            <person name="Heck A.J."/>
            <person name="Mohammed S."/>
        </authorList>
    </citation>
    <scope>PHOSPHORYLATION [LARGE SCALE ANALYSIS] AT SER-21; SER-25; SER-88; SER-424; THR-514; SER-750; SER-813; SER-915; SER-938; SER-947; SER-997; SER-1004 AND SER-1017</scope>
    <scope>IDENTIFICATION BY MASS SPECTROMETRY [LARGE SCALE ANALYSIS]</scope>
    <source>
        <tissue>Cervix carcinoma</tissue>
        <tissue>Erythroleukemia</tissue>
    </source>
</reference>
<reference key="21">
    <citation type="journal article" date="2014" name="J. Proteomics">
        <title>An enzyme assisted RP-RPLC approach for in-depth analysis of human liver phosphoproteome.</title>
        <authorList>
            <person name="Bian Y."/>
            <person name="Song C."/>
            <person name="Cheng K."/>
            <person name="Dong M."/>
            <person name="Wang F."/>
            <person name="Huang J."/>
            <person name="Sun D."/>
            <person name="Wang L."/>
            <person name="Ye M."/>
            <person name="Zou H."/>
        </authorList>
    </citation>
    <scope>PHOSPHORYLATION [LARGE SCALE ANALYSIS] AT SER-21 AND SER-1017</scope>
    <scope>IDENTIFICATION BY MASS SPECTROMETRY [LARGE SCALE ANALYSIS]</scope>
    <source>
        <tissue>Liver</tissue>
    </source>
</reference>
<reference key="22">
    <citation type="journal article" date="2017" name="Nat. Struct. Mol. Biol.">
        <title>Site-specific mapping of the human SUMO proteome reveals co-modification with phosphorylation.</title>
        <authorList>
            <person name="Hendriks I.A."/>
            <person name="Lyon D."/>
            <person name="Young C."/>
            <person name="Jensen L.J."/>
            <person name="Vertegaal A.C."/>
            <person name="Nielsen M.L."/>
        </authorList>
    </citation>
    <scope>SUMOYLATION [LARGE SCALE ANALYSIS] AT LYS-1344</scope>
    <scope>IDENTIFICATION BY MASS SPECTROMETRY [LARGE SCALE ANALYSIS]</scope>
</reference>
<evidence type="ECO:0000250" key="1"/>
<evidence type="ECO:0000250" key="2">
    <source>
        <dbReference type="UniProtKB" id="Q67FY2"/>
    </source>
</evidence>
<evidence type="ECO:0000256" key="3">
    <source>
        <dbReference type="SAM" id="MobiDB-lite"/>
    </source>
</evidence>
<evidence type="ECO:0000269" key="4">
    <source>
    </source>
</evidence>
<evidence type="ECO:0000269" key="5">
    <source>
    </source>
</evidence>
<evidence type="ECO:0000269" key="6">
    <source>
    </source>
</evidence>
<evidence type="ECO:0000269" key="7">
    <source>
    </source>
</evidence>
<evidence type="ECO:0000269" key="8">
    <source>
    </source>
</evidence>
<evidence type="ECO:0000303" key="9">
    <source>
    </source>
</evidence>
<evidence type="ECO:0000303" key="10">
    <source>
    </source>
</evidence>
<evidence type="ECO:0000303" key="11">
    <source>
    </source>
</evidence>
<evidence type="ECO:0000305" key="12"/>
<evidence type="ECO:0007744" key="13">
    <source>
    </source>
</evidence>
<evidence type="ECO:0007744" key="14">
    <source>
    </source>
</evidence>
<evidence type="ECO:0007744" key="15">
    <source>
    </source>
</evidence>
<evidence type="ECO:0007744" key="16">
    <source>
    </source>
</evidence>
<evidence type="ECO:0007744" key="17">
    <source>
    </source>
</evidence>
<evidence type="ECO:0007744" key="18">
    <source>
    </source>
</evidence>
<evidence type="ECO:0007744" key="19">
    <source>
    </source>
</evidence>
<evidence type="ECO:0007744" key="20">
    <source>
    </source>
</evidence>
<evidence type="ECO:0007744" key="21">
    <source>
    </source>
</evidence>
<evidence type="ECO:0007744" key="22">
    <source>
    </source>
</evidence>
<evidence type="ECO:0007829" key="23">
    <source>
        <dbReference type="PDB" id="4UP0"/>
    </source>
</evidence>
<accession>Q86UU0</accession>
<accession>A1A4C1</accession>
<accession>Q67FY1</accession>
<accession>Q6ZWJ0</accession>
<accession>Q6ZWK2</accession>
<protein>
    <recommendedName>
        <fullName>B-cell CLL/lymphoma 9-like protein</fullName>
        <shortName>B-cell lymphoma 9-like protein</shortName>
        <shortName>BCL9-like protein</shortName>
    </recommendedName>
    <alternativeName>
        <fullName>Protein BCL9-2</fullName>
    </alternativeName>
</protein>
<comment type="function">
    <text evidence="1">Transcriptional regulator that acts as an activator. Promotes beta-catenin transcriptional activity. Plays a role in tumorigenesis. Enhances the neoplastic transforming activity of CTNNB1 (By similarity).</text>
</comment>
<comment type="subunit">
    <text evidence="5 6">Found in a complex with CDC73; CTNNB1 and PYGO1. Interacts with CTNNB1.</text>
</comment>
<comment type="subcellular location">
    <subcellularLocation>
        <location evidence="7 8">Nucleus</location>
    </subcellularLocation>
</comment>
<comment type="alternative products">
    <event type="alternative splicing"/>
    <isoform>
        <id>Q86UU0-1</id>
        <name>1</name>
        <sequence type="displayed"/>
    </isoform>
    <isoform>
        <id>Q86UU0-2</id>
        <name>2</name>
        <sequence type="described" ref="VSP_030205"/>
    </isoform>
    <isoform>
        <id>Q86UU0-3</id>
        <name>3</name>
        <sequence type="described" ref="VSP_030207 VSP_030208"/>
    </isoform>
    <isoform>
        <id>Q86UU0-4</id>
        <name>4</name>
        <sequence type="described" ref="VSP_030206"/>
    </isoform>
</comment>
<comment type="tissue specificity">
    <text evidence="4 7 8">Expressed in breast, ductal and invasive ductal carcinomas of the breast, sporadic colorectal adenomas and carcinomas (at protein level). Expressed in fetal brain. Expressed in lung, amygdala, eye, prostate, pancreatic and prostate cancers, head and neck tumors and embryonal tumor.</text>
</comment>
<comment type="domain">
    <text evidence="1">Tne C-terminal domain is important for its transactivation activity.</text>
</comment>
<comment type="similarity">
    <text evidence="12">Belongs to the BCL9 family.</text>
</comment>
<comment type="sequence caution" evidence="12">
    <conflict type="erroneous initiation">
        <sequence resource="EMBL-CDS" id="AAH33257"/>
    </conflict>
    <text>Truncated N-terminus.</text>
</comment>
<comment type="sequence caution" evidence="12">
    <conflict type="erroneous initiation">
        <sequence resource="EMBL-CDS" id="BAC85500"/>
    </conflict>
    <text>Truncated N-terminus.</text>
</comment>
<comment type="sequence caution" evidence="12">
    <conflict type="erroneous initiation">
        <sequence resource="EMBL-CDS" id="BAC85512"/>
    </conflict>
    <text>Truncated N-terminus.</text>
</comment>